<sequence>MRVIMKPLRRTLVFFIFSVFLCGTVSARQIEWQSCMTSPYSDWFGKESSSPELLCGYLSVPLKYTDTGKDVSDENIPLVRLAMTKLPAKSKRKGSVIIISGGPGLPGINPYINFDWPVTNLRESWDIIGFDPRGVGQSFPAINCQQSNQERLVNVSEKQLILQKINACIHNTGAEVIRHIGSHEAVYDIERIRQALGDKQLTAVAYSYGTQIAALYAERFPSSIRSIVFDGVVDIDDLNDNFSWKLRQAHSYQETFDRFAAWCARTKSCPLSSDRNQAIHQFHQLLLKLHNSPLTDSRGESISSDDLISLTTELLLWRSSWPTLATAVRQFSQGIVSNEIETALNSSIASEKVSDALGVILCVDQSDEQLSQEQRKSRKKALADAFPAVNFEREQSDLPEFCELWPIHRDLQQTRLKNTVLPSGLLFVAHKYDPTTPWINARKMADKFSAPLLTINGDGHTLALAGTNLCVDEAVVRHLLFPGKSEDITCQGSGTGDTN</sequence>
<protein>
    <recommendedName>
        <fullName>Putative hydrolase YuaR</fullName>
        <ecNumber>3.4.-.-</ecNumber>
    </recommendedName>
</protein>
<name>YUAR_ECOLI</name>
<gene>
    <name type="primary">yuaR</name>
    <name type="synonym">yddA</name>
    <name type="ordered locus">ECOK12F030</name>
</gene>
<evidence type="ECO:0000250" key="1"/>
<evidence type="ECO:0000255" key="2"/>
<evidence type="ECO:0000305" key="3"/>
<accession>P34211</accession>
<keyword id="KW-0378">Hydrolase</keyword>
<keyword id="KW-0614">Plasmid</keyword>
<keyword id="KW-0732">Signal</keyword>
<feature type="signal peptide" evidence="2">
    <location>
        <begin position="1"/>
        <end position="26"/>
    </location>
</feature>
<feature type="chain" id="PRO_0000027326" description="Putative hydrolase YuaR">
    <location>
        <begin position="27"/>
        <end position="499"/>
    </location>
</feature>
<feature type="domain" description="AB hydrolase-1" evidence="2">
    <location>
        <begin position="94"/>
        <end position="393"/>
    </location>
</feature>
<feature type="active site" description="Nucleophile" evidence="1">
    <location>
        <position position="207"/>
    </location>
</feature>
<feature type="active site" evidence="1">
    <location>
        <position position="433"/>
    </location>
</feature>
<feature type="active site" description="Proton donor" evidence="1">
    <location>
        <position position="460"/>
    </location>
</feature>
<feature type="sequence conflict" description="In Ref. 1; CAA52339." evidence="3" ref="1">
    <original>NTVLPSGLLFVAHKYDPTTPWINARKMADKFSAPLLTINGDGHTLALAGTNLCVDEAVVRHLLFPGKSEDITCQGSGTGDTN</original>
    <variation>ILFYHPVYCLWHTNMIRQLPG</variation>
    <location>
        <begin position="418"/>
        <end position="499"/>
    </location>
</feature>
<proteinExistence type="inferred from homology"/>
<reference key="1">
    <citation type="submission" date="1994-09" db="EMBL/GenBank/DDBJ databases">
        <authorList>
            <person name="Henning U."/>
        </authorList>
    </citation>
    <scope>NUCLEOTIDE SEQUENCE [GENOMIC DNA]</scope>
    <source>
        <strain>K12 / ATCC 12435 / DSM 5695 / NBRC 3302 / NCIMB 9481 / W1485</strain>
    </source>
</reference>
<reference key="2">
    <citation type="submission" date="2000-04" db="EMBL/GenBank/DDBJ databases">
        <title>Complete nucleotide sequence of the F plasmid: its implications for organization and diversification of plasmid genomes.</title>
        <authorList>
            <person name="Shimizu H."/>
            <person name="Saitoh Y."/>
            <person name="Suda Y."/>
            <person name="Uehara K."/>
            <person name="Sampei G."/>
            <person name="Mizobuchi K."/>
        </authorList>
    </citation>
    <scope>NUCLEOTIDE SEQUENCE [LARGE SCALE GENOMIC DNA]</scope>
    <source>
        <strain>K12 / CR63</strain>
    </source>
</reference>
<reference key="3">
    <citation type="journal article" date="1994" name="J. Bacteriol.">
        <title>New outer membrane-associated protease of Escherichia coli K-12.</title>
        <authorList>
            <person name="Kaufmann A."/>
            <person name="Stierhof Y.-D."/>
            <person name="Henning U."/>
        </authorList>
    </citation>
    <scope>NUCLEOTIDE SEQUENCE [GENOMIC DNA] OF 1-226</scope>
    <source>
        <strain>K12 / ATCC 12435 / DSM 5695 / NBRC 3302 / NCIMB 9481 / W1485</strain>
    </source>
</reference>
<geneLocation type="plasmid">
    <name>F</name>
</geneLocation>
<organism>
    <name type="scientific">Escherichia coli (strain K12)</name>
    <dbReference type="NCBI Taxonomy" id="83333"/>
    <lineage>
        <taxon>Bacteria</taxon>
        <taxon>Pseudomonadati</taxon>
        <taxon>Pseudomonadota</taxon>
        <taxon>Gammaproteobacteria</taxon>
        <taxon>Enterobacterales</taxon>
        <taxon>Enterobacteriaceae</taxon>
        <taxon>Escherichia</taxon>
    </lineage>
</organism>
<comment type="similarity">
    <text evidence="3">Belongs to the peptidase S33 family.</text>
</comment>
<dbReference type="EC" id="3.4.-.-"/>
<dbReference type="EMBL" id="X74278">
    <property type="protein sequence ID" value="CAA52339.1"/>
    <property type="molecule type" value="Genomic_DNA"/>
</dbReference>
<dbReference type="EMBL" id="AP001918">
    <property type="protein sequence ID" value="BAA97900.1"/>
    <property type="molecule type" value="Genomic_DNA"/>
</dbReference>
<dbReference type="PIR" id="B36944">
    <property type="entry name" value="B36944"/>
</dbReference>
<dbReference type="RefSeq" id="NP_061409.1">
    <property type="nucleotide sequence ID" value="NC_002483.1"/>
</dbReference>
<dbReference type="RefSeq" id="WP_010892530.1">
    <property type="nucleotide sequence ID" value="NZ_CP014271.1"/>
</dbReference>
<dbReference type="SMR" id="P34211"/>
<dbReference type="ESTHER" id="ecoli-yuar">
    <property type="family name" value="Tiancimycin-TnmK-Tripeptidase-HIP"/>
</dbReference>
<dbReference type="KEGG" id="ecoc:C3026_24265"/>
<dbReference type="PhylomeDB" id="P34211"/>
<dbReference type="GO" id="GO:0016787">
    <property type="term" value="F:hydrolase activity"/>
    <property type="evidence" value="ECO:0007669"/>
    <property type="project" value="UniProtKB-KW"/>
</dbReference>
<dbReference type="Gene3D" id="3.40.50.1820">
    <property type="entry name" value="alpha/beta hydrolase"/>
    <property type="match status" value="1"/>
</dbReference>
<dbReference type="InterPro" id="IPR000073">
    <property type="entry name" value="AB_hydrolase_1"/>
</dbReference>
<dbReference type="InterPro" id="IPR029058">
    <property type="entry name" value="AB_hydrolase_fold"/>
</dbReference>
<dbReference type="InterPro" id="IPR051601">
    <property type="entry name" value="Serine_prot/Carboxylest_S33"/>
</dbReference>
<dbReference type="PANTHER" id="PTHR43248">
    <property type="entry name" value="2-SUCCINYL-6-HYDROXY-2,4-CYCLOHEXADIENE-1-CARBOXYLATE SYNTHASE"/>
    <property type="match status" value="1"/>
</dbReference>
<dbReference type="PANTHER" id="PTHR43248:SF25">
    <property type="entry name" value="AB HYDROLASE-1 DOMAIN-CONTAINING PROTEIN-RELATED"/>
    <property type="match status" value="1"/>
</dbReference>
<dbReference type="Pfam" id="PF00561">
    <property type="entry name" value="Abhydrolase_1"/>
    <property type="match status" value="1"/>
</dbReference>
<dbReference type="SUPFAM" id="SSF53474">
    <property type="entry name" value="alpha/beta-Hydrolases"/>
    <property type="match status" value="1"/>
</dbReference>